<gene>
    <name evidence="5" type="primary">TNMT2</name>
</gene>
<reference key="1">
    <citation type="journal article" date="2009" name="Plant J.">
        <title>Targeted metabolite and transcript profiling for elucidating enzyme function: isolation of novel N-methyltransferases from three benzylisoquinoline alkaloid-producing species.</title>
        <authorList>
            <consortium name="Natural Products Genomics Resource (NAPGEN)"/>
            <person name="Liscombe D.K."/>
            <person name="Ziegler J."/>
            <person name="Schmidt J."/>
            <person name="Ammer C."/>
            <person name="Facchini P.J."/>
        </authorList>
    </citation>
    <scope>NUCLEOTIDE SEQUENCE [MRNA]</scope>
    <scope>INDUCTION BY ELICITOR</scope>
</reference>
<protein>
    <recommendedName>
        <fullName evidence="5">Probable (S)-tetrahydroprotoberberine N-methyltransferase 2</fullName>
        <shortName evidence="5">PbTNMT2</shortName>
        <ecNumber evidence="3">2.1.1.-</ecNumber>
    </recommendedName>
</protein>
<comment type="function">
    <text evidence="3">N-methyltransferase with a strict substrate specificity for (R,S)-tetrahydropalmatine or (R,S)-stylopine.</text>
</comment>
<comment type="catalytic activity">
    <reaction evidence="3">
        <text>(S)-stylopine + S-adenosyl-L-methionine = (S)-cis-N-methylstylopine + S-adenosyl-L-homocysteine</text>
        <dbReference type="Rhea" id="RHEA:75975"/>
        <dbReference type="ChEBI" id="CHEBI:444"/>
        <dbReference type="ChEBI" id="CHEBI:18285"/>
        <dbReference type="ChEBI" id="CHEBI:57856"/>
        <dbReference type="ChEBI" id="CHEBI:59789"/>
    </reaction>
</comment>
<comment type="catalytic activity">
    <reaction evidence="3">
        <text>(S)-tetrahydropalmatine + S-adenosyl-L-methionine = (S)-cis-N-methyltetrahydropalmatine + S-adenosyl-L-homocysteine</text>
        <dbReference type="Rhea" id="RHEA:76047"/>
        <dbReference type="ChEBI" id="CHEBI:16563"/>
        <dbReference type="ChEBI" id="CHEBI:57856"/>
        <dbReference type="ChEBI" id="CHEBI:59789"/>
        <dbReference type="ChEBI" id="CHEBI:194514"/>
    </reaction>
</comment>
<comment type="pathway">
    <text evidence="3">Alkaloid biosynthesis.</text>
</comment>
<comment type="subunit">
    <text evidence="3">Homodimer.</text>
</comment>
<comment type="subcellular location">
    <subcellularLocation>
        <location evidence="6">Cytoplasm</location>
    </subcellularLocation>
</comment>
<comment type="induction">
    <text evidence="4">Down-regulated by elicitor treatment.</text>
</comment>
<comment type="similarity">
    <text evidence="6">Belongs to the CFA/CMAS family.</text>
</comment>
<sequence length="358" mass="40843">MGSIEEVKKESAEETLGRLLRGEINDEELKKLIKYQLEKRLQWGYKSSHQEQLSFNLDFINSLKKMGMSGQVEAFTNEVYELPTECFEAAYGKSMKLSGCYFKHESSTIDEAEEASHELYCERAQIKDGQTVLDIGCGQGGLVLYVAQKYKNCHVTGLTNSKEQVNYILKQAEKLGLRNVDVILADVTQYESDKTYDRILVIGVVEHMKNMQLFIKKLSTWMAEDSLLFVDHSCHKTFNHFFEALDEDDWYSGYIFPPGCATFLSADSLLYFQDDVSVVDHWVVNGMHFARTVDAWRKKLDKNMEAVKEILLPGLGGNHEAVNGVITHIRTCCVGGYVQFSLNDGDEWMNAQLLFKKK</sequence>
<name>TNMT2_PAPBR</name>
<feature type="chain" id="PRO_0000411111" description="Probable (S)-tetrahydroprotoberberine N-methyltransferase 2">
    <location>
        <begin position="1"/>
        <end position="358"/>
    </location>
</feature>
<feature type="active site" evidence="2">
    <location>
        <position position="333"/>
    </location>
</feature>
<feature type="binding site" evidence="1">
    <location>
        <position position="98"/>
    </location>
    <ligand>
        <name>S-adenosyl-L-methionine</name>
        <dbReference type="ChEBI" id="CHEBI:59789"/>
    </ligand>
</feature>
<feature type="binding site" evidence="1">
    <location>
        <position position="136"/>
    </location>
    <ligand>
        <name>S-adenosyl-L-methionine</name>
        <dbReference type="ChEBI" id="CHEBI:59789"/>
    </ligand>
</feature>
<feature type="binding site" evidence="1">
    <location>
        <position position="160"/>
    </location>
    <ligand>
        <name>S-adenosyl-L-methionine</name>
        <dbReference type="ChEBI" id="CHEBI:59789"/>
    </ligand>
</feature>
<feature type="binding site" evidence="1">
    <location>
        <position position="164"/>
    </location>
    <ligand>
        <name>S-adenosyl-L-methionine</name>
        <dbReference type="ChEBI" id="CHEBI:59789"/>
    </ligand>
</feature>
<feature type="binding site" evidence="1">
    <location>
        <position position="186"/>
    </location>
    <ligand>
        <name>S-adenosyl-L-methionine</name>
        <dbReference type="ChEBI" id="CHEBI:59789"/>
    </ligand>
</feature>
<feature type="binding site" evidence="1">
    <location>
        <position position="187"/>
    </location>
    <ligand>
        <name>S-adenosyl-L-methionine</name>
        <dbReference type="ChEBI" id="CHEBI:59789"/>
    </ligand>
</feature>
<feature type="binding site" evidence="1">
    <location>
        <position position="202"/>
    </location>
    <ligand>
        <name>S-adenosyl-L-methionine</name>
        <dbReference type="ChEBI" id="CHEBI:59789"/>
    </ligand>
</feature>
<accession>C3SBU4</accession>
<dbReference type="EC" id="2.1.1.-" evidence="3"/>
<dbReference type="EMBL" id="EU882993">
    <property type="protein sequence ID" value="ACO90236.1"/>
    <property type="molecule type" value="mRNA"/>
</dbReference>
<dbReference type="SMR" id="C3SBU4"/>
<dbReference type="GO" id="GO:0005737">
    <property type="term" value="C:cytoplasm"/>
    <property type="evidence" value="ECO:0007669"/>
    <property type="project" value="UniProtKB-SubCell"/>
</dbReference>
<dbReference type="GO" id="GO:0030782">
    <property type="term" value="F:(S)-tetrahydroprotoberberine N-methyltransferase activity"/>
    <property type="evidence" value="ECO:0007669"/>
    <property type="project" value="UniProtKB-EC"/>
</dbReference>
<dbReference type="GO" id="GO:0032259">
    <property type="term" value="P:methylation"/>
    <property type="evidence" value="ECO:0007669"/>
    <property type="project" value="UniProtKB-KW"/>
</dbReference>
<dbReference type="CDD" id="cd02440">
    <property type="entry name" value="AdoMet_MTases"/>
    <property type="match status" value="1"/>
</dbReference>
<dbReference type="Gene3D" id="3.40.50.150">
    <property type="entry name" value="Vaccinia Virus protein VP39"/>
    <property type="match status" value="1"/>
</dbReference>
<dbReference type="InterPro" id="IPR029063">
    <property type="entry name" value="SAM-dependent_MTases_sf"/>
</dbReference>
<dbReference type="PANTHER" id="PTHR43832">
    <property type="match status" value="1"/>
</dbReference>
<dbReference type="PANTHER" id="PTHR43832:SF1">
    <property type="entry name" value="S-ADENOSYL-L-METHIONINE-DEPENDENT METHYLTRANSFERASES SUPERFAMILY PROTEIN"/>
    <property type="match status" value="1"/>
</dbReference>
<dbReference type="Pfam" id="PF02353">
    <property type="entry name" value="CMAS"/>
    <property type="match status" value="1"/>
</dbReference>
<dbReference type="SUPFAM" id="SSF53335">
    <property type="entry name" value="S-adenosyl-L-methionine-dependent methyltransferases"/>
    <property type="match status" value="1"/>
</dbReference>
<keyword id="KW-0963">Cytoplasm</keyword>
<keyword id="KW-0489">Methyltransferase</keyword>
<keyword id="KW-0949">S-adenosyl-L-methionine</keyword>
<keyword id="KW-0808">Transferase</keyword>
<evidence type="ECO:0000250" key="1">
    <source>
        <dbReference type="UniProtKB" id="C3SBW0"/>
    </source>
</evidence>
<evidence type="ECO:0000250" key="2">
    <source>
        <dbReference type="UniProtKB" id="P9WPB7"/>
    </source>
</evidence>
<evidence type="ECO:0000250" key="3">
    <source>
        <dbReference type="UniProtKB" id="Q108P1"/>
    </source>
</evidence>
<evidence type="ECO:0000269" key="4">
    <source>
    </source>
</evidence>
<evidence type="ECO:0000303" key="5">
    <source>
    </source>
</evidence>
<evidence type="ECO:0000305" key="6"/>
<proteinExistence type="evidence at transcript level"/>
<organism>
    <name type="scientific">Papaver bracteatum</name>
    <name type="common">Great scarlet poppy</name>
    <dbReference type="NCBI Taxonomy" id="215227"/>
    <lineage>
        <taxon>Eukaryota</taxon>
        <taxon>Viridiplantae</taxon>
        <taxon>Streptophyta</taxon>
        <taxon>Embryophyta</taxon>
        <taxon>Tracheophyta</taxon>
        <taxon>Spermatophyta</taxon>
        <taxon>Magnoliopsida</taxon>
        <taxon>Ranunculales</taxon>
        <taxon>Papaveraceae</taxon>
        <taxon>Papaveroideae</taxon>
        <taxon>Papaver</taxon>
    </lineage>
</organism>